<comment type="function">
    <text evidence="1">Substrate-specific adapter of a BCR (BTB-CUL3-RBX1) E3 ubiquitin ligase complex required for The BCR(KLHL8) ubiquitin ligase complex mediates ubiquitination and degradation of RAPSN.</text>
</comment>
<comment type="pathway">
    <text>Protein modification; protein ubiquitination.</text>
</comment>
<comment type="subunit">
    <text evidence="1">Component of the BCR(KLHL8) E3 ubiquitin ligase complex, at least composed of CUL3, KLHL8 and RBX1. Interacts with RAPSN (By similarity).</text>
</comment>
<keyword id="KW-0007">Acetylation</keyword>
<keyword id="KW-0880">Kelch repeat</keyword>
<keyword id="KW-1185">Reference proteome</keyword>
<keyword id="KW-0677">Repeat</keyword>
<keyword id="KW-0833">Ubl conjugation pathway</keyword>
<protein>
    <recommendedName>
        <fullName>Kelch-like protein 8</fullName>
    </recommendedName>
</protein>
<reference key="1">
    <citation type="journal article" date="2005" name="Science">
        <title>The transcriptional landscape of the mammalian genome.</title>
        <authorList>
            <person name="Carninci P."/>
            <person name="Kasukawa T."/>
            <person name="Katayama S."/>
            <person name="Gough J."/>
            <person name="Frith M.C."/>
            <person name="Maeda N."/>
            <person name="Oyama R."/>
            <person name="Ravasi T."/>
            <person name="Lenhard B."/>
            <person name="Wells C."/>
            <person name="Kodzius R."/>
            <person name="Shimokawa K."/>
            <person name="Bajic V.B."/>
            <person name="Brenner S.E."/>
            <person name="Batalov S."/>
            <person name="Forrest A.R."/>
            <person name="Zavolan M."/>
            <person name="Davis M.J."/>
            <person name="Wilming L.G."/>
            <person name="Aidinis V."/>
            <person name="Allen J.E."/>
            <person name="Ambesi-Impiombato A."/>
            <person name="Apweiler R."/>
            <person name="Aturaliya R.N."/>
            <person name="Bailey T.L."/>
            <person name="Bansal M."/>
            <person name="Baxter L."/>
            <person name="Beisel K.W."/>
            <person name="Bersano T."/>
            <person name="Bono H."/>
            <person name="Chalk A.M."/>
            <person name="Chiu K.P."/>
            <person name="Choudhary V."/>
            <person name="Christoffels A."/>
            <person name="Clutterbuck D.R."/>
            <person name="Crowe M.L."/>
            <person name="Dalla E."/>
            <person name="Dalrymple B.P."/>
            <person name="de Bono B."/>
            <person name="Della Gatta G."/>
            <person name="di Bernardo D."/>
            <person name="Down T."/>
            <person name="Engstrom P."/>
            <person name="Fagiolini M."/>
            <person name="Faulkner G."/>
            <person name="Fletcher C.F."/>
            <person name="Fukushima T."/>
            <person name="Furuno M."/>
            <person name="Futaki S."/>
            <person name="Gariboldi M."/>
            <person name="Georgii-Hemming P."/>
            <person name="Gingeras T.R."/>
            <person name="Gojobori T."/>
            <person name="Green R.E."/>
            <person name="Gustincich S."/>
            <person name="Harbers M."/>
            <person name="Hayashi Y."/>
            <person name="Hensch T.K."/>
            <person name="Hirokawa N."/>
            <person name="Hill D."/>
            <person name="Huminiecki L."/>
            <person name="Iacono M."/>
            <person name="Ikeo K."/>
            <person name="Iwama A."/>
            <person name="Ishikawa T."/>
            <person name="Jakt M."/>
            <person name="Kanapin A."/>
            <person name="Katoh M."/>
            <person name="Kawasawa Y."/>
            <person name="Kelso J."/>
            <person name="Kitamura H."/>
            <person name="Kitano H."/>
            <person name="Kollias G."/>
            <person name="Krishnan S.P."/>
            <person name="Kruger A."/>
            <person name="Kummerfeld S.K."/>
            <person name="Kurochkin I.V."/>
            <person name="Lareau L.F."/>
            <person name="Lazarevic D."/>
            <person name="Lipovich L."/>
            <person name="Liu J."/>
            <person name="Liuni S."/>
            <person name="McWilliam S."/>
            <person name="Madan Babu M."/>
            <person name="Madera M."/>
            <person name="Marchionni L."/>
            <person name="Matsuda H."/>
            <person name="Matsuzawa S."/>
            <person name="Miki H."/>
            <person name="Mignone F."/>
            <person name="Miyake S."/>
            <person name="Morris K."/>
            <person name="Mottagui-Tabar S."/>
            <person name="Mulder N."/>
            <person name="Nakano N."/>
            <person name="Nakauchi H."/>
            <person name="Ng P."/>
            <person name="Nilsson R."/>
            <person name="Nishiguchi S."/>
            <person name="Nishikawa S."/>
            <person name="Nori F."/>
            <person name="Ohara O."/>
            <person name="Okazaki Y."/>
            <person name="Orlando V."/>
            <person name="Pang K.C."/>
            <person name="Pavan W.J."/>
            <person name="Pavesi G."/>
            <person name="Pesole G."/>
            <person name="Petrovsky N."/>
            <person name="Piazza S."/>
            <person name="Reed J."/>
            <person name="Reid J.F."/>
            <person name="Ring B.Z."/>
            <person name="Ringwald M."/>
            <person name="Rost B."/>
            <person name="Ruan Y."/>
            <person name="Salzberg S.L."/>
            <person name="Sandelin A."/>
            <person name="Schneider C."/>
            <person name="Schoenbach C."/>
            <person name="Sekiguchi K."/>
            <person name="Semple C.A."/>
            <person name="Seno S."/>
            <person name="Sessa L."/>
            <person name="Sheng Y."/>
            <person name="Shibata Y."/>
            <person name="Shimada H."/>
            <person name="Shimada K."/>
            <person name="Silva D."/>
            <person name="Sinclair B."/>
            <person name="Sperling S."/>
            <person name="Stupka E."/>
            <person name="Sugiura K."/>
            <person name="Sultana R."/>
            <person name="Takenaka Y."/>
            <person name="Taki K."/>
            <person name="Tammoja K."/>
            <person name="Tan S.L."/>
            <person name="Tang S."/>
            <person name="Taylor M.S."/>
            <person name="Tegner J."/>
            <person name="Teichmann S.A."/>
            <person name="Ueda H.R."/>
            <person name="van Nimwegen E."/>
            <person name="Verardo R."/>
            <person name="Wei C.L."/>
            <person name="Yagi K."/>
            <person name="Yamanishi H."/>
            <person name="Zabarovsky E."/>
            <person name="Zhu S."/>
            <person name="Zimmer A."/>
            <person name="Hide W."/>
            <person name="Bult C."/>
            <person name="Grimmond S.M."/>
            <person name="Teasdale R.D."/>
            <person name="Liu E.T."/>
            <person name="Brusic V."/>
            <person name="Quackenbush J."/>
            <person name="Wahlestedt C."/>
            <person name="Mattick J.S."/>
            <person name="Hume D.A."/>
            <person name="Kai C."/>
            <person name="Sasaki D."/>
            <person name="Tomaru Y."/>
            <person name="Fukuda S."/>
            <person name="Kanamori-Katayama M."/>
            <person name="Suzuki M."/>
            <person name="Aoki J."/>
            <person name="Arakawa T."/>
            <person name="Iida J."/>
            <person name="Imamura K."/>
            <person name="Itoh M."/>
            <person name="Kato T."/>
            <person name="Kawaji H."/>
            <person name="Kawagashira N."/>
            <person name="Kawashima T."/>
            <person name="Kojima M."/>
            <person name="Kondo S."/>
            <person name="Konno H."/>
            <person name="Nakano K."/>
            <person name="Ninomiya N."/>
            <person name="Nishio T."/>
            <person name="Okada M."/>
            <person name="Plessy C."/>
            <person name="Shibata K."/>
            <person name="Shiraki T."/>
            <person name="Suzuki S."/>
            <person name="Tagami M."/>
            <person name="Waki K."/>
            <person name="Watahiki A."/>
            <person name="Okamura-Oho Y."/>
            <person name="Suzuki H."/>
            <person name="Kawai J."/>
            <person name="Hayashizaki Y."/>
        </authorList>
    </citation>
    <scope>NUCLEOTIDE SEQUENCE [LARGE SCALE MRNA]</scope>
    <source>
        <strain>C57BL/6J</strain>
        <tissue>Hippocampus</tissue>
        <tissue>Thymus</tissue>
    </source>
</reference>
<reference key="2">
    <citation type="journal article" date="2009" name="PLoS Biol.">
        <title>Lineage-specific biology revealed by a finished genome assembly of the mouse.</title>
        <authorList>
            <person name="Church D.M."/>
            <person name="Goodstadt L."/>
            <person name="Hillier L.W."/>
            <person name="Zody M.C."/>
            <person name="Goldstein S."/>
            <person name="She X."/>
            <person name="Bult C.J."/>
            <person name="Agarwala R."/>
            <person name="Cherry J.L."/>
            <person name="DiCuccio M."/>
            <person name="Hlavina W."/>
            <person name="Kapustin Y."/>
            <person name="Meric P."/>
            <person name="Maglott D."/>
            <person name="Birtle Z."/>
            <person name="Marques A.C."/>
            <person name="Graves T."/>
            <person name="Zhou S."/>
            <person name="Teague B."/>
            <person name="Potamousis K."/>
            <person name="Churas C."/>
            <person name="Place M."/>
            <person name="Herschleb J."/>
            <person name="Runnheim R."/>
            <person name="Forrest D."/>
            <person name="Amos-Landgraf J."/>
            <person name="Schwartz D.C."/>
            <person name="Cheng Z."/>
            <person name="Lindblad-Toh K."/>
            <person name="Eichler E.E."/>
            <person name="Ponting C.P."/>
        </authorList>
    </citation>
    <scope>NUCLEOTIDE SEQUENCE [LARGE SCALE GENOMIC DNA]</scope>
    <source>
        <strain>C57BL/6J</strain>
    </source>
</reference>
<reference key="3">
    <citation type="journal article" date="2004" name="Genome Res.">
        <title>The status, quality, and expansion of the NIH full-length cDNA project: the Mammalian Gene Collection (MGC).</title>
        <authorList>
            <consortium name="The MGC Project Team"/>
        </authorList>
    </citation>
    <scope>NUCLEOTIDE SEQUENCE [LARGE SCALE MRNA]</scope>
    <source>
        <strain>C57BL/6J</strain>
        <tissue>Eye</tissue>
    </source>
</reference>
<accession>P59280</accession>
<accession>Q8CD84</accession>
<dbReference type="EMBL" id="AK031028">
    <property type="protein sequence ID" value="BAC27220.1"/>
    <property type="molecule type" value="mRNA"/>
</dbReference>
<dbReference type="EMBL" id="AK049960">
    <property type="protein sequence ID" value="BAC34008.1"/>
    <property type="molecule type" value="mRNA"/>
</dbReference>
<dbReference type="EMBL" id="AL731554">
    <property type="status" value="NOT_ANNOTATED_CDS"/>
    <property type="molecule type" value="Genomic_DNA"/>
</dbReference>
<dbReference type="EMBL" id="BC086802">
    <property type="protein sequence ID" value="AAH86802.1"/>
    <property type="molecule type" value="mRNA"/>
</dbReference>
<dbReference type="CCDS" id="CCDS19479.1"/>
<dbReference type="RefSeq" id="NP_001346915.1">
    <property type="nucleotide sequence ID" value="NM_001359986.1"/>
</dbReference>
<dbReference type="RefSeq" id="NP_001346916.1">
    <property type="nucleotide sequence ID" value="NM_001359987.1"/>
</dbReference>
<dbReference type="RefSeq" id="NP_848856.1">
    <property type="nucleotide sequence ID" value="NM_178741.4"/>
</dbReference>
<dbReference type="RefSeq" id="XP_006535005.1">
    <property type="nucleotide sequence ID" value="XM_006534942.3"/>
</dbReference>
<dbReference type="RefSeq" id="XP_017176372.1">
    <property type="nucleotide sequence ID" value="XM_017320883.1"/>
</dbReference>
<dbReference type="RefSeq" id="XP_030110368.1">
    <property type="nucleotide sequence ID" value="XM_030254508.2"/>
</dbReference>
<dbReference type="RefSeq" id="XP_030110369.1">
    <property type="nucleotide sequence ID" value="XM_030254509.2"/>
</dbReference>
<dbReference type="RefSeq" id="XP_030110370.1">
    <property type="nucleotide sequence ID" value="XM_030254510.2"/>
</dbReference>
<dbReference type="RefSeq" id="XP_036021030.1">
    <property type="nucleotide sequence ID" value="XM_036165137.1"/>
</dbReference>
<dbReference type="RefSeq" id="XP_036021031.1">
    <property type="nucleotide sequence ID" value="XM_036165138.1"/>
</dbReference>
<dbReference type="RefSeq" id="XP_036021032.1">
    <property type="nucleotide sequence ID" value="XM_036165139.1"/>
</dbReference>
<dbReference type="SMR" id="P59280"/>
<dbReference type="FunCoup" id="P59280">
    <property type="interactions" value="664"/>
</dbReference>
<dbReference type="IntAct" id="P59280">
    <property type="interactions" value="1"/>
</dbReference>
<dbReference type="MINT" id="P59280"/>
<dbReference type="STRING" id="10090.ENSMUSP00000031254"/>
<dbReference type="iPTMnet" id="P59280"/>
<dbReference type="PhosphoSitePlus" id="P59280"/>
<dbReference type="PaxDb" id="10090-ENSMUSP00000031254"/>
<dbReference type="ProteomicsDB" id="264851"/>
<dbReference type="Antibodypedia" id="2897">
    <property type="antibodies" value="100 antibodies from 20 providers"/>
</dbReference>
<dbReference type="Ensembl" id="ENSMUST00000031254.9">
    <property type="protein sequence ID" value="ENSMUSP00000031254.3"/>
    <property type="gene ID" value="ENSMUSG00000029312.13"/>
</dbReference>
<dbReference type="GeneID" id="246293"/>
<dbReference type="KEGG" id="mmu:246293"/>
<dbReference type="UCSC" id="uc008yjv.1">
    <property type="organism name" value="mouse"/>
</dbReference>
<dbReference type="AGR" id="MGI:2179430"/>
<dbReference type="CTD" id="57563"/>
<dbReference type="MGI" id="MGI:2179430">
    <property type="gene designation" value="Klhl8"/>
</dbReference>
<dbReference type="VEuPathDB" id="HostDB:ENSMUSG00000029312"/>
<dbReference type="eggNOG" id="KOG4441">
    <property type="taxonomic scope" value="Eukaryota"/>
</dbReference>
<dbReference type="GeneTree" id="ENSGT00940000157583"/>
<dbReference type="InParanoid" id="P59280"/>
<dbReference type="OMA" id="VRPMSTS"/>
<dbReference type="OrthoDB" id="45365at2759"/>
<dbReference type="PhylomeDB" id="P59280"/>
<dbReference type="TreeFam" id="TF329218"/>
<dbReference type="UniPathway" id="UPA00143"/>
<dbReference type="BioGRID-ORCS" id="246293">
    <property type="hits" value="2 hits in 79 CRISPR screens"/>
</dbReference>
<dbReference type="PRO" id="PR:P59280"/>
<dbReference type="Proteomes" id="UP000000589">
    <property type="component" value="Chromosome 5"/>
</dbReference>
<dbReference type="RNAct" id="P59280">
    <property type="molecule type" value="protein"/>
</dbReference>
<dbReference type="Bgee" id="ENSMUSG00000029312">
    <property type="expression patterns" value="Expressed in primary oocyte and 209 other cell types or tissues"/>
</dbReference>
<dbReference type="ExpressionAtlas" id="P59280">
    <property type="expression patterns" value="baseline and differential"/>
</dbReference>
<dbReference type="GO" id="GO:0031463">
    <property type="term" value="C:Cul3-RING ubiquitin ligase complex"/>
    <property type="evidence" value="ECO:0000250"/>
    <property type="project" value="UniProtKB"/>
</dbReference>
<dbReference type="GO" id="GO:0005654">
    <property type="term" value="C:nucleoplasm"/>
    <property type="evidence" value="ECO:0007669"/>
    <property type="project" value="Ensembl"/>
</dbReference>
<dbReference type="GO" id="GO:0016567">
    <property type="term" value="P:protein ubiquitination"/>
    <property type="evidence" value="ECO:0000250"/>
    <property type="project" value="UniProtKB"/>
</dbReference>
<dbReference type="GO" id="GO:0006511">
    <property type="term" value="P:ubiquitin-dependent protein catabolic process"/>
    <property type="evidence" value="ECO:0000250"/>
    <property type="project" value="UniProtKB"/>
</dbReference>
<dbReference type="CDD" id="cd18448">
    <property type="entry name" value="BACK_KLHL8"/>
    <property type="match status" value="1"/>
</dbReference>
<dbReference type="CDD" id="cd18238">
    <property type="entry name" value="BTB_POZ_KLHL8"/>
    <property type="match status" value="1"/>
</dbReference>
<dbReference type="FunFam" id="1.25.40.420:FF:000001">
    <property type="entry name" value="Kelch-like family member 12"/>
    <property type="match status" value="1"/>
</dbReference>
<dbReference type="FunFam" id="2.120.10.80:FF:000070">
    <property type="entry name" value="kelch-like protein 8 isoform X1"/>
    <property type="match status" value="1"/>
</dbReference>
<dbReference type="FunFam" id="3.30.710.10:FF:000066">
    <property type="entry name" value="kelch-like protein 8 isoform X1"/>
    <property type="match status" value="1"/>
</dbReference>
<dbReference type="Gene3D" id="1.25.40.420">
    <property type="match status" value="1"/>
</dbReference>
<dbReference type="Gene3D" id="2.120.10.80">
    <property type="entry name" value="Kelch-type beta propeller"/>
    <property type="match status" value="1"/>
</dbReference>
<dbReference type="Gene3D" id="3.30.710.10">
    <property type="entry name" value="Potassium Channel Kv1.1, Chain A"/>
    <property type="match status" value="1"/>
</dbReference>
<dbReference type="InterPro" id="IPR011705">
    <property type="entry name" value="BACK"/>
</dbReference>
<dbReference type="InterPro" id="IPR017096">
    <property type="entry name" value="BTB-kelch_protein"/>
</dbReference>
<dbReference type="InterPro" id="IPR000210">
    <property type="entry name" value="BTB/POZ_dom"/>
</dbReference>
<dbReference type="InterPro" id="IPR015915">
    <property type="entry name" value="Kelch-typ_b-propeller"/>
</dbReference>
<dbReference type="InterPro" id="IPR006652">
    <property type="entry name" value="Kelch_1"/>
</dbReference>
<dbReference type="InterPro" id="IPR011333">
    <property type="entry name" value="SKP1/BTB/POZ_sf"/>
</dbReference>
<dbReference type="PANTHER" id="PTHR24412">
    <property type="entry name" value="KELCH PROTEIN"/>
    <property type="match status" value="1"/>
</dbReference>
<dbReference type="PANTHER" id="PTHR24412:SF441">
    <property type="entry name" value="KELCH-LIKE PROTEIN 28"/>
    <property type="match status" value="1"/>
</dbReference>
<dbReference type="Pfam" id="PF07707">
    <property type="entry name" value="BACK"/>
    <property type="match status" value="1"/>
</dbReference>
<dbReference type="Pfam" id="PF00651">
    <property type="entry name" value="BTB"/>
    <property type="match status" value="1"/>
</dbReference>
<dbReference type="Pfam" id="PF01344">
    <property type="entry name" value="Kelch_1"/>
    <property type="match status" value="2"/>
</dbReference>
<dbReference type="Pfam" id="PF24681">
    <property type="entry name" value="Kelch_KLHDC2_KLHL20_DRC7"/>
    <property type="match status" value="1"/>
</dbReference>
<dbReference type="PIRSF" id="PIRSF037037">
    <property type="entry name" value="Kelch-like_protein_gigaxonin"/>
    <property type="match status" value="1"/>
</dbReference>
<dbReference type="PRINTS" id="PR00501">
    <property type="entry name" value="KELCHREPEAT"/>
</dbReference>
<dbReference type="SMART" id="SM00875">
    <property type="entry name" value="BACK"/>
    <property type="match status" value="1"/>
</dbReference>
<dbReference type="SMART" id="SM00225">
    <property type="entry name" value="BTB"/>
    <property type="match status" value="1"/>
</dbReference>
<dbReference type="SMART" id="SM00612">
    <property type="entry name" value="Kelch"/>
    <property type="match status" value="6"/>
</dbReference>
<dbReference type="SUPFAM" id="SSF117281">
    <property type="entry name" value="Kelch motif"/>
    <property type="match status" value="2"/>
</dbReference>
<dbReference type="SUPFAM" id="SSF54695">
    <property type="entry name" value="POZ domain"/>
    <property type="match status" value="1"/>
</dbReference>
<dbReference type="PROSITE" id="PS50097">
    <property type="entry name" value="BTB"/>
    <property type="match status" value="1"/>
</dbReference>
<sequence>MASESTNGKQARSHVTKGRRQYQHQHQQQQQQQQQVRSRSSVSECDGDDSFIFEANEAWKDFHGSLLGFYENGELCDVTLKVGSKLISCHKLVLACVIPYFRAMFLSEMSEAKQALIEIRDFDGDAVEDLVKFVYSSRLTLTVDNVQPLLYAACILQVELVARACCEYMQLHFHPSNCLAVRAFAESHNRIDLMDMADQYACEHFTEVVECEDFVSVSPQHLHKLLSSSDLNIDSEKQVYSAAIKWLLANPQHHPKWLDETLAQVRLPLLPVDFLMGVVAKEQIVKQNLKCRDLLDEARNYHLHLSSKPVPDFEYTVRTTPRKHTAGVLFCVGGRGGSGDPFRSIECYSINKNSWFFGPEMNSRRRHVGVISVEGKVYAVGGHDGNEHLGSMEMFDPLTNKWMMKASMNTKRRGIALASLGGPIYAIGGLDDNTCFSDVERYDIESDQWSTVAPMNTPRGGVGSVALINHVYAVGGNDGVASLSSVERYHPHLDKWIEVKEMGQRRAGNGVSELHGCLYVVGGFDDNSPLSSVERYDPRSNKWDYVAALTTPRGGVGIATVMGKIFAVGGHNGNAYLNTVEAFDPVLNKWELVGPVSHCRAGAGVAVCDCLTSQIRDVGHGSTNVVDCM</sequence>
<organism>
    <name type="scientific">Mus musculus</name>
    <name type="common">Mouse</name>
    <dbReference type="NCBI Taxonomy" id="10090"/>
    <lineage>
        <taxon>Eukaryota</taxon>
        <taxon>Metazoa</taxon>
        <taxon>Chordata</taxon>
        <taxon>Craniata</taxon>
        <taxon>Vertebrata</taxon>
        <taxon>Euteleostomi</taxon>
        <taxon>Mammalia</taxon>
        <taxon>Eutheria</taxon>
        <taxon>Euarchontoglires</taxon>
        <taxon>Glires</taxon>
        <taxon>Rodentia</taxon>
        <taxon>Myomorpha</taxon>
        <taxon>Muroidea</taxon>
        <taxon>Muridae</taxon>
        <taxon>Murinae</taxon>
        <taxon>Mus</taxon>
        <taxon>Mus</taxon>
    </lineage>
</organism>
<gene>
    <name type="primary">Klhl8</name>
</gene>
<proteinExistence type="evidence at transcript level"/>
<evidence type="ECO:0000250" key="1"/>
<evidence type="ECO:0000250" key="2">
    <source>
        <dbReference type="UniProtKB" id="Q9P2G9"/>
    </source>
</evidence>
<evidence type="ECO:0000255" key="3">
    <source>
        <dbReference type="PROSITE-ProRule" id="PRU00037"/>
    </source>
</evidence>
<evidence type="ECO:0000256" key="4">
    <source>
        <dbReference type="SAM" id="MobiDB-lite"/>
    </source>
</evidence>
<evidence type="ECO:0000305" key="5"/>
<name>KLHL8_MOUSE</name>
<feature type="initiator methionine" description="Removed" evidence="2">
    <location>
        <position position="1"/>
    </location>
</feature>
<feature type="chain" id="PRO_0000119109" description="Kelch-like protein 8">
    <location>
        <begin position="2"/>
        <end position="629"/>
    </location>
</feature>
<feature type="domain" description="BTB" evidence="3">
    <location>
        <begin position="76"/>
        <end position="143"/>
    </location>
</feature>
<feature type="domain" description="BACK">
    <location>
        <begin position="178"/>
        <end position="279"/>
    </location>
</feature>
<feature type="repeat" description="Kelch 1">
    <location>
        <begin position="328"/>
        <end position="375"/>
    </location>
</feature>
<feature type="repeat" description="Kelch 2">
    <location>
        <begin position="376"/>
        <end position="422"/>
    </location>
</feature>
<feature type="repeat" description="Kelch 3">
    <location>
        <begin position="424"/>
        <end position="469"/>
    </location>
</feature>
<feature type="repeat" description="Kelch 4">
    <location>
        <begin position="471"/>
        <end position="516"/>
    </location>
</feature>
<feature type="repeat" description="Kelch 5">
    <location>
        <begin position="517"/>
        <end position="563"/>
    </location>
</feature>
<feature type="repeat" description="Kelch 6">
    <location>
        <begin position="565"/>
        <end position="610"/>
    </location>
</feature>
<feature type="region of interest" description="Disordered" evidence="4">
    <location>
        <begin position="1"/>
        <end position="40"/>
    </location>
</feature>
<feature type="compositionally biased region" description="Polar residues" evidence="4">
    <location>
        <begin position="1"/>
        <end position="10"/>
    </location>
</feature>
<feature type="compositionally biased region" description="Basic residues" evidence="4">
    <location>
        <begin position="11"/>
        <end position="23"/>
    </location>
</feature>
<feature type="compositionally biased region" description="Low complexity" evidence="4">
    <location>
        <begin position="24"/>
        <end position="35"/>
    </location>
</feature>
<feature type="modified residue" description="N-acetylalanine" evidence="2">
    <location>
        <position position="2"/>
    </location>
</feature>
<feature type="sequence conflict" description="In Ref. 1; BAC34008." evidence="5" ref="1">
    <original>Q</original>
    <variation>R</variation>
    <location>
        <position position="29"/>
    </location>
</feature>